<gene>
    <name evidence="1" type="primary">tig</name>
    <name type="ordered locus">LBA0846</name>
</gene>
<sequence>MSVKWEKTGKTTGELTFDISKDEIKLGLDQAFKRIKKNLRVPGFRKGHVSRVIFDQYYGEEALYEDALNIVLPNAYAAAVKEAGINAVGQPQIVPVSMDKDKDWTMKATVTVQPEVELGEYKGIEVPKQNTRVYQKDIDAELDKRREQSAELVLKKGKAENGDTVTIDYKGTIDGKEFDGGSAENYSLELGSGTFIPGFEDQLVGHEAGDDVDVVVTFPKDYGAKDLAGKEAHFATKIHEVKSKQLPELDDEFAKDVDDSVDTLDELKEKIKKDLKDQKEQVANDAIQEAAIEGAVKNATIDEIPDAMIQEDVDTQLNQYLGNMQRQGIDPQTYYKLTNTTEDQLRSQFAKNAAERVKTNLVLEAIVAAEDLKATKEEIDKEIKDLAAEYNMDEKVVRNTLSDDMLGHDITVRKAMDLITDNAKQVAKSKLEAKDSDDKESK</sequence>
<accession>Q5FKR7</accession>
<evidence type="ECO:0000255" key="1">
    <source>
        <dbReference type="HAMAP-Rule" id="MF_00303"/>
    </source>
</evidence>
<feature type="chain" id="PRO_0000179366" description="Trigger factor">
    <location>
        <begin position="1"/>
        <end position="442"/>
    </location>
</feature>
<feature type="domain" description="PPIase FKBP-type" evidence="1">
    <location>
        <begin position="162"/>
        <end position="247"/>
    </location>
</feature>
<organism>
    <name type="scientific">Lactobacillus acidophilus (strain ATCC 700396 / NCK56 / N2 / NCFM)</name>
    <dbReference type="NCBI Taxonomy" id="272621"/>
    <lineage>
        <taxon>Bacteria</taxon>
        <taxon>Bacillati</taxon>
        <taxon>Bacillota</taxon>
        <taxon>Bacilli</taxon>
        <taxon>Lactobacillales</taxon>
        <taxon>Lactobacillaceae</taxon>
        <taxon>Lactobacillus</taxon>
    </lineage>
</organism>
<dbReference type="EC" id="5.2.1.8" evidence="1"/>
<dbReference type="EMBL" id="CP000033">
    <property type="protein sequence ID" value="AAV42707.1"/>
    <property type="molecule type" value="Genomic_DNA"/>
</dbReference>
<dbReference type="RefSeq" id="WP_003546863.1">
    <property type="nucleotide sequence ID" value="NC_006814.3"/>
</dbReference>
<dbReference type="RefSeq" id="YP_193738.1">
    <property type="nucleotide sequence ID" value="NC_006814.3"/>
</dbReference>
<dbReference type="SMR" id="Q5FKR7"/>
<dbReference type="STRING" id="272621.LBA0846"/>
<dbReference type="GeneID" id="93290031"/>
<dbReference type="KEGG" id="lac:LBA0846"/>
<dbReference type="PATRIC" id="fig|272621.13.peg.808"/>
<dbReference type="eggNOG" id="COG0544">
    <property type="taxonomic scope" value="Bacteria"/>
</dbReference>
<dbReference type="HOGENOM" id="CLU_033058_3_2_9"/>
<dbReference type="OrthoDB" id="9767721at2"/>
<dbReference type="BioCyc" id="LACI272621:G1G49-857-MONOMER"/>
<dbReference type="Proteomes" id="UP000006381">
    <property type="component" value="Chromosome"/>
</dbReference>
<dbReference type="GO" id="GO:0005737">
    <property type="term" value="C:cytoplasm"/>
    <property type="evidence" value="ECO:0007669"/>
    <property type="project" value="UniProtKB-SubCell"/>
</dbReference>
<dbReference type="GO" id="GO:0003755">
    <property type="term" value="F:peptidyl-prolyl cis-trans isomerase activity"/>
    <property type="evidence" value="ECO:0007669"/>
    <property type="project" value="UniProtKB-UniRule"/>
</dbReference>
<dbReference type="GO" id="GO:0044183">
    <property type="term" value="F:protein folding chaperone"/>
    <property type="evidence" value="ECO:0007669"/>
    <property type="project" value="TreeGrafter"/>
</dbReference>
<dbReference type="GO" id="GO:0043022">
    <property type="term" value="F:ribosome binding"/>
    <property type="evidence" value="ECO:0007669"/>
    <property type="project" value="TreeGrafter"/>
</dbReference>
<dbReference type="GO" id="GO:0051083">
    <property type="term" value="P:'de novo' cotranslational protein folding"/>
    <property type="evidence" value="ECO:0007669"/>
    <property type="project" value="TreeGrafter"/>
</dbReference>
<dbReference type="GO" id="GO:0051301">
    <property type="term" value="P:cell division"/>
    <property type="evidence" value="ECO:0007669"/>
    <property type="project" value="UniProtKB-KW"/>
</dbReference>
<dbReference type="GO" id="GO:0061077">
    <property type="term" value="P:chaperone-mediated protein folding"/>
    <property type="evidence" value="ECO:0007669"/>
    <property type="project" value="TreeGrafter"/>
</dbReference>
<dbReference type="GO" id="GO:0015031">
    <property type="term" value="P:protein transport"/>
    <property type="evidence" value="ECO:0007669"/>
    <property type="project" value="UniProtKB-UniRule"/>
</dbReference>
<dbReference type="GO" id="GO:0043335">
    <property type="term" value="P:protein unfolding"/>
    <property type="evidence" value="ECO:0007669"/>
    <property type="project" value="TreeGrafter"/>
</dbReference>
<dbReference type="FunFam" id="3.10.50.40:FF:000001">
    <property type="entry name" value="Trigger factor"/>
    <property type="match status" value="1"/>
</dbReference>
<dbReference type="Gene3D" id="3.10.50.40">
    <property type="match status" value="1"/>
</dbReference>
<dbReference type="Gene3D" id="3.30.70.1050">
    <property type="entry name" value="Trigger factor ribosome-binding domain"/>
    <property type="match status" value="1"/>
</dbReference>
<dbReference type="Gene3D" id="1.10.3120.10">
    <property type="entry name" value="Trigger factor, C-terminal domain"/>
    <property type="match status" value="1"/>
</dbReference>
<dbReference type="HAMAP" id="MF_00303">
    <property type="entry name" value="Trigger_factor_Tig"/>
    <property type="match status" value="1"/>
</dbReference>
<dbReference type="InterPro" id="IPR046357">
    <property type="entry name" value="PPIase_dom_sf"/>
</dbReference>
<dbReference type="InterPro" id="IPR001179">
    <property type="entry name" value="PPIase_FKBP_dom"/>
</dbReference>
<dbReference type="InterPro" id="IPR005215">
    <property type="entry name" value="Trig_fac"/>
</dbReference>
<dbReference type="InterPro" id="IPR008880">
    <property type="entry name" value="Trigger_fac_C"/>
</dbReference>
<dbReference type="InterPro" id="IPR037041">
    <property type="entry name" value="Trigger_fac_C_sf"/>
</dbReference>
<dbReference type="InterPro" id="IPR008881">
    <property type="entry name" value="Trigger_fac_ribosome-bd_bac"/>
</dbReference>
<dbReference type="InterPro" id="IPR036611">
    <property type="entry name" value="Trigger_fac_ribosome-bd_sf"/>
</dbReference>
<dbReference type="InterPro" id="IPR027304">
    <property type="entry name" value="Trigger_fact/SurA_dom_sf"/>
</dbReference>
<dbReference type="NCBIfam" id="TIGR00115">
    <property type="entry name" value="tig"/>
    <property type="match status" value="1"/>
</dbReference>
<dbReference type="PANTHER" id="PTHR30560">
    <property type="entry name" value="TRIGGER FACTOR CHAPERONE AND PEPTIDYL-PROLYL CIS/TRANS ISOMERASE"/>
    <property type="match status" value="1"/>
</dbReference>
<dbReference type="PANTHER" id="PTHR30560:SF3">
    <property type="entry name" value="TRIGGER FACTOR-LIKE PROTEIN TIG, CHLOROPLASTIC"/>
    <property type="match status" value="1"/>
</dbReference>
<dbReference type="Pfam" id="PF00254">
    <property type="entry name" value="FKBP_C"/>
    <property type="match status" value="1"/>
</dbReference>
<dbReference type="Pfam" id="PF05698">
    <property type="entry name" value="Trigger_C"/>
    <property type="match status" value="1"/>
</dbReference>
<dbReference type="Pfam" id="PF05697">
    <property type="entry name" value="Trigger_N"/>
    <property type="match status" value="1"/>
</dbReference>
<dbReference type="PIRSF" id="PIRSF003095">
    <property type="entry name" value="Trigger_factor"/>
    <property type="match status" value="1"/>
</dbReference>
<dbReference type="SUPFAM" id="SSF54534">
    <property type="entry name" value="FKBP-like"/>
    <property type="match status" value="1"/>
</dbReference>
<dbReference type="SUPFAM" id="SSF109998">
    <property type="entry name" value="Triger factor/SurA peptide-binding domain-like"/>
    <property type="match status" value="1"/>
</dbReference>
<dbReference type="SUPFAM" id="SSF102735">
    <property type="entry name" value="Trigger factor ribosome-binding domain"/>
    <property type="match status" value="1"/>
</dbReference>
<dbReference type="PROSITE" id="PS50059">
    <property type="entry name" value="FKBP_PPIASE"/>
    <property type="match status" value="1"/>
</dbReference>
<proteinExistence type="inferred from homology"/>
<protein>
    <recommendedName>
        <fullName evidence="1">Trigger factor</fullName>
        <shortName evidence="1">TF</shortName>
        <ecNumber evidence="1">5.2.1.8</ecNumber>
    </recommendedName>
    <alternativeName>
        <fullName evidence="1">PPIase</fullName>
    </alternativeName>
</protein>
<reference key="1">
    <citation type="journal article" date="2005" name="Proc. Natl. Acad. Sci. U.S.A.">
        <title>Complete genome sequence of the probiotic lactic acid bacterium Lactobacillus acidophilus NCFM.</title>
        <authorList>
            <person name="Altermann E."/>
            <person name="Russell W.M."/>
            <person name="Azcarate-Peril M.A."/>
            <person name="Barrangou R."/>
            <person name="Buck B.L."/>
            <person name="McAuliffe O."/>
            <person name="Souther N."/>
            <person name="Dobson A."/>
            <person name="Duong T."/>
            <person name="Callanan M."/>
            <person name="Lick S."/>
            <person name="Hamrick A."/>
            <person name="Cano R."/>
            <person name="Klaenhammer T.R."/>
        </authorList>
    </citation>
    <scope>NUCLEOTIDE SEQUENCE [LARGE SCALE GENOMIC DNA]</scope>
    <source>
        <strain>ATCC 700396 / NCK56 / N2 / NCFM</strain>
    </source>
</reference>
<keyword id="KW-0131">Cell cycle</keyword>
<keyword id="KW-0132">Cell division</keyword>
<keyword id="KW-0143">Chaperone</keyword>
<keyword id="KW-0963">Cytoplasm</keyword>
<keyword id="KW-0413">Isomerase</keyword>
<keyword id="KW-1185">Reference proteome</keyword>
<keyword id="KW-0697">Rotamase</keyword>
<name>TIG_LACAC</name>
<comment type="function">
    <text evidence="1">Involved in protein export. Acts as a chaperone by maintaining the newly synthesized protein in an open conformation. Functions as a peptidyl-prolyl cis-trans isomerase.</text>
</comment>
<comment type="catalytic activity">
    <reaction evidence="1">
        <text>[protein]-peptidylproline (omega=180) = [protein]-peptidylproline (omega=0)</text>
        <dbReference type="Rhea" id="RHEA:16237"/>
        <dbReference type="Rhea" id="RHEA-COMP:10747"/>
        <dbReference type="Rhea" id="RHEA-COMP:10748"/>
        <dbReference type="ChEBI" id="CHEBI:83833"/>
        <dbReference type="ChEBI" id="CHEBI:83834"/>
        <dbReference type="EC" id="5.2.1.8"/>
    </reaction>
</comment>
<comment type="subcellular location">
    <subcellularLocation>
        <location>Cytoplasm</location>
    </subcellularLocation>
    <text evidence="1">About half TF is bound to the ribosome near the polypeptide exit tunnel while the other half is free in the cytoplasm.</text>
</comment>
<comment type="domain">
    <text evidence="1">Consists of 3 domains; the N-terminus binds the ribosome, the middle domain has PPIase activity, while the C-terminus has intrinsic chaperone activity on its own.</text>
</comment>
<comment type="similarity">
    <text evidence="1">Belongs to the FKBP-type PPIase family. Tig subfamily.</text>
</comment>